<feature type="chain" id="PRO_0000089001" description="Actin">
    <location>
        <begin position="1"/>
        <end position="375"/>
    </location>
</feature>
<feature type="modified residue" description="N-acetylmethionine" evidence="1">
    <location>
        <position position="1"/>
    </location>
</feature>
<feature type="strand" evidence="4">
    <location>
        <begin position="8"/>
        <end position="12"/>
    </location>
</feature>
<feature type="strand" evidence="4">
    <location>
        <begin position="14"/>
        <end position="21"/>
    </location>
</feature>
<feature type="strand" evidence="4">
    <location>
        <begin position="28"/>
        <end position="32"/>
    </location>
</feature>
<feature type="helix" evidence="4">
    <location>
        <begin position="56"/>
        <end position="60"/>
    </location>
</feature>
<feature type="strand" evidence="4">
    <location>
        <begin position="70"/>
        <end position="72"/>
    </location>
</feature>
<feature type="helix" evidence="4">
    <location>
        <begin position="79"/>
        <end position="90"/>
    </location>
</feature>
<feature type="turn" evidence="4">
    <location>
        <begin position="91"/>
        <end position="94"/>
    </location>
</feature>
<feature type="helix" evidence="4">
    <location>
        <begin position="98"/>
        <end position="100"/>
    </location>
</feature>
<feature type="strand" evidence="4">
    <location>
        <begin position="103"/>
        <end position="107"/>
    </location>
</feature>
<feature type="helix" evidence="4">
    <location>
        <begin position="113"/>
        <end position="125"/>
    </location>
</feature>
<feature type="strand" evidence="4">
    <location>
        <begin position="132"/>
        <end position="136"/>
    </location>
</feature>
<feature type="helix" evidence="4">
    <location>
        <begin position="137"/>
        <end position="144"/>
    </location>
</feature>
<feature type="strand" evidence="4">
    <location>
        <begin position="148"/>
        <end position="155"/>
    </location>
</feature>
<feature type="strand" evidence="4">
    <location>
        <begin position="160"/>
        <end position="166"/>
    </location>
</feature>
<feature type="strand" evidence="4">
    <location>
        <begin position="176"/>
        <end position="179"/>
    </location>
</feature>
<feature type="helix" evidence="4">
    <location>
        <begin position="182"/>
        <end position="194"/>
    </location>
</feature>
<feature type="helix" evidence="4">
    <location>
        <begin position="206"/>
        <end position="215"/>
    </location>
</feature>
<feature type="helix" evidence="4">
    <location>
        <begin position="223"/>
        <end position="231"/>
    </location>
</feature>
<feature type="strand" evidence="4">
    <location>
        <begin position="238"/>
        <end position="241"/>
    </location>
</feature>
<feature type="strand" evidence="4">
    <location>
        <begin position="247"/>
        <end position="250"/>
    </location>
</feature>
<feature type="helix" evidence="4">
    <location>
        <begin position="253"/>
        <end position="256"/>
    </location>
</feature>
<feature type="helix" evidence="4">
    <location>
        <begin position="258"/>
        <end position="261"/>
    </location>
</feature>
<feature type="helix" evidence="4">
    <location>
        <begin position="264"/>
        <end position="267"/>
    </location>
</feature>
<feature type="helix" evidence="4">
    <location>
        <begin position="274"/>
        <end position="282"/>
    </location>
</feature>
<feature type="turn" evidence="4">
    <location>
        <begin position="287"/>
        <end position="289"/>
    </location>
</feature>
<feature type="helix" evidence="4">
    <location>
        <begin position="290"/>
        <end position="294"/>
    </location>
</feature>
<feature type="strand" evidence="4">
    <location>
        <begin position="297"/>
        <end position="301"/>
    </location>
</feature>
<feature type="helix" evidence="4">
    <location>
        <begin position="302"/>
        <end position="304"/>
    </location>
</feature>
<feature type="helix" evidence="4">
    <location>
        <begin position="309"/>
        <end position="320"/>
    </location>
</feature>
<feature type="helix" evidence="4">
    <location>
        <begin position="335"/>
        <end position="337"/>
    </location>
</feature>
<feature type="helix" evidence="4">
    <location>
        <begin position="338"/>
        <end position="348"/>
    </location>
</feature>
<feature type="helix" evidence="4">
    <location>
        <begin position="352"/>
        <end position="354"/>
    </location>
</feature>
<feature type="helix" evidence="4">
    <location>
        <begin position="359"/>
        <end position="365"/>
    </location>
</feature>
<feature type="helix" evidence="4">
    <location>
        <begin position="366"/>
        <end position="369"/>
    </location>
</feature>
<feature type="helix" evidence="4">
    <location>
        <begin position="370"/>
        <end position="373"/>
    </location>
</feature>
<organism>
    <name type="scientific">Saccharomyces bayanus</name>
    <name type="common">Yeast</name>
    <name type="synonym">Saccharomyces uvarum x Saccharomyces eubayanus</name>
    <dbReference type="NCBI Taxonomy" id="4931"/>
    <lineage>
        <taxon>Eukaryota</taxon>
        <taxon>Fungi</taxon>
        <taxon>Dikarya</taxon>
        <taxon>Ascomycota</taxon>
        <taxon>Saccharomycotina</taxon>
        <taxon>Saccharomycetes</taxon>
        <taxon>Saccharomycetales</taxon>
        <taxon>Saccharomycetaceae</taxon>
        <taxon>Saccharomyces</taxon>
    </lineage>
</organism>
<sequence>MDSEVAALVIDNGSGMCKAGFAGDDAPRAVFPSIVGRPRHQGIMVGMGQKDSYVGDEAQSKRGILTLRYPIEHGIVTNWDDMEKIWHHTFYNELRVAPEEHPVLLTEAPMNPKSNREKMTQIMFETFNVPAFYVSIQAVLSLYSSGRTTGIVLDSGDGVTHVVPIYAGFSLPHAILRIDLAGRDLTDYLMKILSERGYSFSTTAEREIVRDIKEKLCYVALDFEQEMQTAAQSSSIEKSYELPDGQVITIGNERFRAPEALFHPSVLGLESAGIDQTTYNSIMKCDVDVRKELYGNIVMSGGTTMFPGIAERMQKEITALAPSSMKVKIIAPPERKYSVWIGGSILASLTTFQQMWISKQEYDESGPSIVHHKCF</sequence>
<proteinExistence type="evidence at protein level"/>
<name>ACT_SACBA</name>
<accession>P60011</accession>
<accession>P02579</accession>
<protein>
    <recommendedName>
        <fullName>Actin</fullName>
        <ecNumber evidence="2">3.6.4.-</ecNumber>
    </recommendedName>
</protein>
<reference key="1">
    <citation type="submission" date="1992-07" db="EMBL/GenBank/DDBJ databases">
        <authorList>
            <person name="Kaneko Y."/>
            <person name="Takeuchi M."/>
        </authorList>
    </citation>
    <scope>NUCLEOTIDE SEQUENCE [GENOMIC DNA]</scope>
    <source>
        <strain>B19-3C</strain>
    </source>
</reference>
<keyword id="KW-0002">3D-structure</keyword>
<keyword id="KW-0007">Acetylation</keyword>
<keyword id="KW-0067">ATP-binding</keyword>
<keyword id="KW-0963">Cytoplasm</keyword>
<keyword id="KW-0206">Cytoskeleton</keyword>
<keyword id="KW-0378">Hydrolase</keyword>
<keyword id="KW-0547">Nucleotide-binding</keyword>
<gene>
    <name type="primary">ACT1</name>
</gene>
<evidence type="ECO:0000250" key="1"/>
<evidence type="ECO:0000250" key="2">
    <source>
        <dbReference type="UniProtKB" id="P60010"/>
    </source>
</evidence>
<evidence type="ECO:0000305" key="3"/>
<evidence type="ECO:0007829" key="4">
    <source>
        <dbReference type="PDB" id="5I9E"/>
    </source>
</evidence>
<comment type="function">
    <text>Actins are highly conserved proteins that are involved in various types of cell motility and are ubiquitously expressed in all eukaryotic cells.</text>
</comment>
<comment type="catalytic activity">
    <reaction evidence="2">
        <text>ATP + H2O = ADP + phosphate + H(+)</text>
        <dbReference type="Rhea" id="RHEA:13065"/>
        <dbReference type="ChEBI" id="CHEBI:15377"/>
        <dbReference type="ChEBI" id="CHEBI:15378"/>
        <dbReference type="ChEBI" id="CHEBI:30616"/>
        <dbReference type="ChEBI" id="CHEBI:43474"/>
        <dbReference type="ChEBI" id="CHEBI:456216"/>
    </reaction>
</comment>
<comment type="subcellular location">
    <subcellularLocation>
        <location>Cytoplasm</location>
        <location>Cytoskeleton</location>
    </subcellularLocation>
</comment>
<comment type="similarity">
    <text evidence="3">Belongs to the actin family.</text>
</comment>
<dbReference type="EC" id="3.6.4.-" evidence="2"/>
<dbReference type="EMBL" id="D12534">
    <property type="protein sequence ID" value="BAA02097.1"/>
    <property type="molecule type" value="Genomic_DNA"/>
</dbReference>
<dbReference type="PDB" id="5I9E">
    <property type="method" value="X-ray"/>
    <property type="resolution" value="2.80 A"/>
    <property type="chains" value="B/D=1-375"/>
</dbReference>
<dbReference type="PDBsum" id="5I9E"/>
<dbReference type="SMR" id="P60011"/>
<dbReference type="GO" id="GO:0005737">
    <property type="term" value="C:cytoplasm"/>
    <property type="evidence" value="ECO:0007669"/>
    <property type="project" value="UniProtKB-KW"/>
</dbReference>
<dbReference type="GO" id="GO:0005856">
    <property type="term" value="C:cytoskeleton"/>
    <property type="evidence" value="ECO:0007669"/>
    <property type="project" value="UniProtKB-SubCell"/>
</dbReference>
<dbReference type="GO" id="GO:0005524">
    <property type="term" value="F:ATP binding"/>
    <property type="evidence" value="ECO:0007669"/>
    <property type="project" value="UniProtKB-KW"/>
</dbReference>
<dbReference type="GO" id="GO:0016787">
    <property type="term" value="F:hydrolase activity"/>
    <property type="evidence" value="ECO:0007669"/>
    <property type="project" value="UniProtKB-KW"/>
</dbReference>
<dbReference type="CDD" id="cd10224">
    <property type="entry name" value="ASKHA_NBD_actin"/>
    <property type="match status" value="1"/>
</dbReference>
<dbReference type="FunFam" id="3.30.420.40:FF:000148">
    <property type="entry name" value="Actin, alpha skeletal muscle"/>
    <property type="match status" value="1"/>
</dbReference>
<dbReference type="FunFam" id="3.90.640.10:FF:000001">
    <property type="entry name" value="Actin, muscle"/>
    <property type="match status" value="1"/>
</dbReference>
<dbReference type="FunFam" id="3.30.420.40:FF:000404">
    <property type="entry name" value="Major actin"/>
    <property type="match status" value="1"/>
</dbReference>
<dbReference type="FunFam" id="3.30.420.40:FF:000058">
    <property type="entry name" value="Putative actin-related protein 5"/>
    <property type="match status" value="1"/>
</dbReference>
<dbReference type="Gene3D" id="3.30.420.40">
    <property type="match status" value="2"/>
</dbReference>
<dbReference type="Gene3D" id="3.90.640.10">
    <property type="entry name" value="Actin, Chain A, domain 4"/>
    <property type="match status" value="1"/>
</dbReference>
<dbReference type="InterPro" id="IPR004000">
    <property type="entry name" value="Actin"/>
</dbReference>
<dbReference type="InterPro" id="IPR020902">
    <property type="entry name" value="Actin/actin-like_CS"/>
</dbReference>
<dbReference type="InterPro" id="IPR004001">
    <property type="entry name" value="Actin_CS"/>
</dbReference>
<dbReference type="InterPro" id="IPR043129">
    <property type="entry name" value="ATPase_NBD"/>
</dbReference>
<dbReference type="PANTHER" id="PTHR11937">
    <property type="entry name" value="ACTIN"/>
    <property type="match status" value="1"/>
</dbReference>
<dbReference type="Pfam" id="PF00022">
    <property type="entry name" value="Actin"/>
    <property type="match status" value="1"/>
</dbReference>
<dbReference type="PRINTS" id="PR00190">
    <property type="entry name" value="ACTIN"/>
</dbReference>
<dbReference type="SMART" id="SM00268">
    <property type="entry name" value="ACTIN"/>
    <property type="match status" value="1"/>
</dbReference>
<dbReference type="SUPFAM" id="SSF53067">
    <property type="entry name" value="Actin-like ATPase domain"/>
    <property type="match status" value="2"/>
</dbReference>
<dbReference type="PROSITE" id="PS00406">
    <property type="entry name" value="ACTINS_1"/>
    <property type="match status" value="1"/>
</dbReference>
<dbReference type="PROSITE" id="PS00432">
    <property type="entry name" value="ACTINS_2"/>
    <property type="match status" value="1"/>
</dbReference>
<dbReference type="PROSITE" id="PS01132">
    <property type="entry name" value="ACTINS_ACT_LIKE"/>
    <property type="match status" value="1"/>
</dbReference>